<organism>
    <name type="scientific">Flammulina velutipes</name>
    <name type="common">Agaricus velutipes</name>
    <dbReference type="NCBI Taxonomy" id="38945"/>
    <lineage>
        <taxon>Eukaryota</taxon>
        <taxon>Fungi</taxon>
        <taxon>Dikarya</taxon>
        <taxon>Basidiomycota</taxon>
        <taxon>Agaricomycotina</taxon>
        <taxon>Agaricomycetes</taxon>
        <taxon>Agaricomycetidae</taxon>
        <taxon>Agaricales</taxon>
        <taxon>Marasmiineae</taxon>
        <taxon>Physalacriaceae</taxon>
        <taxon>Flammulina</taxon>
    </lineage>
</organism>
<sequence length="131" mass="13171">MFARRAISIFAFMLVALSIFAAATPLDARTNPTVTVTVTAPGSTATIPAGQCNVSNQQCCNSVQSASSTPVSVILGLLGIVLQDLNVLVGLTCSPITVIGGGNGGCNANPVCCQNNSFGSLISIGCIPISL</sequence>
<comment type="function">
    <text evidence="6">Aerial growth, conidiation, and dispersal of filamentous fungi in the environment rely upon a capability of their secreting small amphipathic proteins called hydrophobins (HPBs) with low sequence identity. Class I can self-assemble into an outermost layer of rodlet bundles on aerial cell surfaces, conferring cellular hydrophobicity that supports fungal growth, development and dispersal; whereas Class II form highly ordered films at water-air interfaces through intermolecular interactions but contribute nothing to the rodlet structure.</text>
</comment>
<comment type="subunit">
    <text evidence="1">Self-assembles to form functional amyloid fibrils called rodlets. Self-assembly into fibrillar rodlets occurs spontaneously at hydrophobic:hydrophilic interfaces and the rodlets further associate laterally to form amphipathic monolayers.</text>
</comment>
<comment type="subcellular location">
    <subcellularLocation>
        <location evidence="1">Secreted</location>
    </subcellularLocation>
    <subcellularLocation>
        <location evidence="1">Secreted</location>
        <location evidence="1">Cell wall</location>
    </subcellularLocation>
</comment>
<comment type="developmental stage">
    <text evidence="4">Shows relatively higher levels of expression in the primordial stages and relatively low levels in the mycelial stage.</text>
</comment>
<comment type="induction">
    <text evidence="4">A CT-rich motif, which is often found immediately upstream of the transcription start point of highly expressed filamentous fungal genes, is present at the expected position.</text>
</comment>
<comment type="similarity">
    <text evidence="6">Belongs to the fungal hydrophobin family.</text>
</comment>
<proteinExistence type="evidence at transcript level"/>
<keyword id="KW-0134">Cell wall</keyword>
<keyword id="KW-1015">Disulfide bond</keyword>
<keyword id="KW-0325">Glycoprotein</keyword>
<keyword id="KW-0964">Secreted</keyword>
<keyword id="KW-0732">Signal</keyword>
<gene>
    <name evidence="5" type="primary">Hyd-9</name>
</gene>
<evidence type="ECO:0000250" key="1">
    <source>
        <dbReference type="UniProtKB" id="Q04571"/>
    </source>
</evidence>
<evidence type="ECO:0000255" key="2"/>
<evidence type="ECO:0000255" key="3">
    <source>
        <dbReference type="PROSITE-ProRule" id="PRU00498"/>
    </source>
</evidence>
<evidence type="ECO:0000269" key="4">
    <source ref="1"/>
</evidence>
<evidence type="ECO:0000303" key="5">
    <source ref="1"/>
</evidence>
<evidence type="ECO:0000305" key="6"/>
<reference key="1">
    <citation type="journal article" date="2016" name="Mycoscience">
        <title>Further characterization of hydrophobin genes in genome of Flammulina velutipes.</title>
        <authorList>
            <person name="Kim H.-I."/>
            <person name="Lee C.-S."/>
            <person name="Park Y.-J."/>
        </authorList>
    </citation>
    <scope>NUCLEOTIDE SEQUENCE [GENOMIC DNA]</scope>
    <scope>DEVELOPMENTAL STAGE</scope>
    <scope>INDUCTION</scope>
</reference>
<name>HYD9_FLAVE</name>
<dbReference type="EMBL" id="KT868841">
    <property type="protein sequence ID" value="AOV80989.1"/>
    <property type="molecule type" value="Genomic_DNA"/>
</dbReference>
<dbReference type="SMR" id="A0A1I9QLD0"/>
<dbReference type="GO" id="GO:0005576">
    <property type="term" value="C:extracellular region"/>
    <property type="evidence" value="ECO:0007669"/>
    <property type="project" value="UniProtKB-KW"/>
</dbReference>
<dbReference type="GO" id="GO:0009277">
    <property type="term" value="C:fungal-type cell wall"/>
    <property type="evidence" value="ECO:0007669"/>
    <property type="project" value="InterPro"/>
</dbReference>
<dbReference type="GO" id="GO:0005199">
    <property type="term" value="F:structural constituent of cell wall"/>
    <property type="evidence" value="ECO:0007669"/>
    <property type="project" value="InterPro"/>
</dbReference>
<dbReference type="CDD" id="cd23507">
    <property type="entry name" value="hydrophobin_I"/>
    <property type="match status" value="1"/>
</dbReference>
<dbReference type="InterPro" id="IPR001338">
    <property type="entry name" value="Hydrophobin"/>
</dbReference>
<dbReference type="Pfam" id="PF01185">
    <property type="entry name" value="Hydrophobin"/>
    <property type="match status" value="1"/>
</dbReference>
<dbReference type="SMART" id="SM00075">
    <property type="entry name" value="HYDRO"/>
    <property type="match status" value="1"/>
</dbReference>
<accession>A0A1I9QLD0</accession>
<protein>
    <recommendedName>
        <fullName evidence="5">Class I hydrophobin 9</fullName>
    </recommendedName>
</protein>
<feature type="signal peptide" evidence="2">
    <location>
        <begin position="1"/>
        <end position="23"/>
    </location>
</feature>
<feature type="chain" id="PRO_5013984040" description="Class I hydrophobin 9">
    <location>
        <begin position="24"/>
        <end position="131"/>
    </location>
</feature>
<feature type="glycosylation site" description="N-linked (GlcNAc...) asparagine" evidence="3">
    <location>
        <position position="53"/>
    </location>
</feature>
<feature type="glycosylation site" description="N-linked (GlcNAc...) asparagine" evidence="3">
    <location>
        <position position="115"/>
    </location>
</feature>
<feature type="disulfide bond" evidence="1">
    <location>
        <begin position="52"/>
        <end position="112"/>
    </location>
</feature>
<feature type="disulfide bond" evidence="1">
    <location>
        <begin position="59"/>
        <end position="106"/>
    </location>
</feature>
<feature type="disulfide bond" evidence="1">
    <location>
        <begin position="60"/>
        <end position="93"/>
    </location>
</feature>
<feature type="disulfide bond" evidence="1">
    <location>
        <begin position="113"/>
        <end position="126"/>
    </location>
</feature>